<name>ULK2_MOUSE</name>
<sequence>MEVVGDFEYCKRDLVGHGAFAVVFRGRHRQKTDWEVAIKSINKKNLSKSQILLGKEIKILKELQHENIVALYDVQELPNSVFLVMEYCNGGDLADYLQAKGTLSEDTIRVFLHQIAAAMRILHSKGIIHRDLKPQNILLSYANRRKSNVSGIRIKIADFGFARYLHSNTMAATLCGSPMYMAPEVIMSQHYDAKADLWSIGTVIYQCLVGKPPFQANSPQDLRMFYEKNRSLMPSIPRETSPYLANLLLGLLQRNQKDRMDFEAFFSHPFLEQVPVKKSCPVPVPVYSGPVPGSSCSSSPSCRFASPPSLPDMQHIQEENLSSPPLGPPNYLQVSKDSASNSSKNSSCDTDDFVLVPHNISSDHSYDMPMGTTARRASNEFFMCGGQCQPTVSPHSETAPIPVPTQVRNYQRIEQNLISTASSGTNPHGSPRSAVVRRSNTSPMGFLRVGSCSPVPGDTVQTGGRRLSTGSSRPYSPSPLVGTIPEQFSQCCCGHPQGHEARSRHSSGSPVPQTQAPQSLLLGARLQSAPTLTDIYQNKQKLRKQHSDPVCPSHAGAGYSYSPQPSRPGSLGTSPTKHTGSSPRNSDWFFKTPLPTIIGSPTKTTAPFKIPKTQASSNLLALVTRHGPAESQSKDGNDPRECSHCLSVQGSERHRSEQQQSKAVFGRSVSTGKLSEQQVKAPLGGHQGSTDSLNTERPMDVAPAGACGVMLALPAGTAASARAVLFTVGSPPHSATAPTCTHMVLRTRTTSVGSSSSGGSLCSASGRVCVGSPPGPGLGSSPPGAEGAPSLRYVPYGASPPSLEGLITFEAPELPEETLMEREHTDTLRHLNMMLMFTECVLDLTAVRGGNPELCTSAVSLYQIQESVVVDQISQLSKDWGRVEQLVLYMKAAQLLAASLHLAKAQVKSGKLSPSMAVKQVVKNLNERYKFCITMCKKLTEKLNRFFSDKQRFIDEINSVTAEKLIYNCAVEMVQSAALDEMFQQTEDIVYRYHKAALLLEGLSKILQDPTDVENVHKYKCSIERRLSALCCSTATV</sequence>
<dbReference type="EC" id="2.7.11.1"/>
<dbReference type="EMBL" id="AF145922">
    <property type="protein sequence ID" value="AAF18325.1"/>
    <property type="molecule type" value="mRNA"/>
</dbReference>
<dbReference type="EMBL" id="AB019577">
    <property type="protein sequence ID" value="BAA77341.1"/>
    <property type="molecule type" value="mRNA"/>
</dbReference>
<dbReference type="EMBL" id="AK146620">
    <property type="protein sequence ID" value="BAE27309.1"/>
    <property type="molecule type" value="mRNA"/>
</dbReference>
<dbReference type="EMBL" id="AK122331">
    <property type="protein sequence ID" value="BAC65613.2"/>
    <property type="status" value="ALT_INIT"/>
    <property type="molecule type" value="mRNA"/>
</dbReference>
<dbReference type="EMBL" id="BC046778">
    <property type="protein sequence ID" value="AAH46778.1"/>
    <property type="molecule type" value="mRNA"/>
</dbReference>
<dbReference type="EMBL" id="BC053029">
    <property type="protein sequence ID" value="AAH53029.1"/>
    <property type="molecule type" value="mRNA"/>
</dbReference>
<dbReference type="CCDS" id="CCDS24820.1"/>
<dbReference type="RefSeq" id="NP_038909.3">
    <property type="nucleotide sequence ID" value="NM_013881.4"/>
</dbReference>
<dbReference type="SMR" id="Q9QY01"/>
<dbReference type="BioGRID" id="205934">
    <property type="interactions" value="11"/>
</dbReference>
<dbReference type="DIP" id="DIP-60901N"/>
<dbReference type="FunCoup" id="Q9QY01">
    <property type="interactions" value="2373"/>
</dbReference>
<dbReference type="IntAct" id="Q9QY01">
    <property type="interactions" value="10"/>
</dbReference>
<dbReference type="MINT" id="Q9QY01"/>
<dbReference type="STRING" id="10090.ENSMUSP00000004920"/>
<dbReference type="GlyGen" id="Q9QY01">
    <property type="glycosylation" value="5 sites, 1 N-linked glycan (1 site), 1 O-linked glycan (4 sites)"/>
</dbReference>
<dbReference type="iPTMnet" id="Q9QY01"/>
<dbReference type="PhosphoSitePlus" id="Q9QY01"/>
<dbReference type="PaxDb" id="10090-ENSMUSP00000004920"/>
<dbReference type="ProteomicsDB" id="298125"/>
<dbReference type="Antibodypedia" id="2063">
    <property type="antibodies" value="549 antibodies from 33 providers"/>
</dbReference>
<dbReference type="DNASU" id="29869"/>
<dbReference type="Ensembl" id="ENSMUST00000004920.4">
    <property type="protein sequence ID" value="ENSMUSP00000004920.4"/>
    <property type="gene ID" value="ENSMUSG00000004798.15"/>
</dbReference>
<dbReference type="GeneID" id="29869"/>
<dbReference type="KEGG" id="mmu:29869"/>
<dbReference type="UCSC" id="uc007jih.2">
    <property type="organism name" value="mouse"/>
</dbReference>
<dbReference type="AGR" id="MGI:1352758"/>
<dbReference type="CTD" id="9706"/>
<dbReference type="MGI" id="MGI:1352758">
    <property type="gene designation" value="Ulk2"/>
</dbReference>
<dbReference type="VEuPathDB" id="HostDB:ENSMUSG00000004798"/>
<dbReference type="eggNOG" id="KOG0595">
    <property type="taxonomic scope" value="Eukaryota"/>
</dbReference>
<dbReference type="GeneTree" id="ENSGT00940000157588"/>
<dbReference type="HOGENOM" id="CLU_011264_0_0_1"/>
<dbReference type="InParanoid" id="Q9QY01"/>
<dbReference type="OMA" id="SFFSHPF"/>
<dbReference type="OrthoDB" id="346907at2759"/>
<dbReference type="PhylomeDB" id="Q9QY01"/>
<dbReference type="TreeFam" id="TF324551"/>
<dbReference type="BioGRID-ORCS" id="29869">
    <property type="hits" value="5 hits in 80 CRISPR screens"/>
</dbReference>
<dbReference type="ChiTaRS" id="Ulk2">
    <property type="organism name" value="mouse"/>
</dbReference>
<dbReference type="PRO" id="PR:Q9QY01"/>
<dbReference type="Proteomes" id="UP000000589">
    <property type="component" value="Chromosome 11"/>
</dbReference>
<dbReference type="RNAct" id="Q9QY01">
    <property type="molecule type" value="protein"/>
</dbReference>
<dbReference type="Bgee" id="ENSMUSG00000004798">
    <property type="expression patterns" value="Expressed in triceps brachii and 258 other cell types or tissues"/>
</dbReference>
<dbReference type="GO" id="GO:0030659">
    <property type="term" value="C:cytoplasmic vesicle membrane"/>
    <property type="evidence" value="ECO:0007669"/>
    <property type="project" value="UniProtKB-SubCell"/>
</dbReference>
<dbReference type="GO" id="GO:0034045">
    <property type="term" value="C:phagophore assembly site membrane"/>
    <property type="evidence" value="ECO:0000314"/>
    <property type="project" value="UniProtKB"/>
</dbReference>
<dbReference type="GO" id="GO:0005524">
    <property type="term" value="F:ATP binding"/>
    <property type="evidence" value="ECO:0007669"/>
    <property type="project" value="UniProtKB-KW"/>
</dbReference>
<dbReference type="GO" id="GO:0106310">
    <property type="term" value="F:protein serine kinase activity"/>
    <property type="evidence" value="ECO:0007669"/>
    <property type="project" value="RHEA"/>
</dbReference>
<dbReference type="GO" id="GO:0004674">
    <property type="term" value="F:protein serine/threonine kinase activity"/>
    <property type="evidence" value="ECO:0000314"/>
    <property type="project" value="UniProtKB"/>
</dbReference>
<dbReference type="GO" id="GO:0006914">
    <property type="term" value="P:autophagy"/>
    <property type="evidence" value="ECO:0000315"/>
    <property type="project" value="GO_Central"/>
</dbReference>
<dbReference type="GO" id="GO:0048675">
    <property type="term" value="P:axon extension"/>
    <property type="evidence" value="ECO:0000315"/>
    <property type="project" value="MGI"/>
</dbReference>
<dbReference type="GO" id="GO:0007411">
    <property type="term" value="P:axon guidance"/>
    <property type="evidence" value="ECO:0000315"/>
    <property type="project" value="MGI"/>
</dbReference>
<dbReference type="GO" id="GO:0048668">
    <property type="term" value="P:collateral sprouting"/>
    <property type="evidence" value="ECO:0000315"/>
    <property type="project" value="MGI"/>
</dbReference>
<dbReference type="GO" id="GO:0048671">
    <property type="term" value="P:negative regulation of collateral sprouting"/>
    <property type="evidence" value="ECO:0000315"/>
    <property type="project" value="MGI"/>
</dbReference>
<dbReference type="GO" id="GO:0008104">
    <property type="term" value="P:protein localization"/>
    <property type="evidence" value="ECO:0000316"/>
    <property type="project" value="MGI"/>
</dbReference>
<dbReference type="GO" id="GO:0010506">
    <property type="term" value="P:regulation of autophagy"/>
    <property type="evidence" value="ECO:0007669"/>
    <property type="project" value="InterPro"/>
</dbReference>
<dbReference type="GO" id="GO:0042594">
    <property type="term" value="P:response to starvation"/>
    <property type="evidence" value="ECO:0000314"/>
    <property type="project" value="UniProtKB"/>
</dbReference>
<dbReference type="GO" id="GO:0007165">
    <property type="term" value="P:signal transduction"/>
    <property type="evidence" value="ECO:0007669"/>
    <property type="project" value="InterPro"/>
</dbReference>
<dbReference type="GO" id="GO:0160038">
    <property type="term" value="P:somatic sensory system development"/>
    <property type="evidence" value="ECO:0000316"/>
    <property type="project" value="MGI"/>
</dbReference>
<dbReference type="CDD" id="cd14201">
    <property type="entry name" value="STKc_ULK2"/>
    <property type="match status" value="1"/>
</dbReference>
<dbReference type="FunFam" id="1.10.510.10:FF:000128">
    <property type="entry name" value="serine/threonine-protein kinase ULK2 isoform X2"/>
    <property type="match status" value="1"/>
</dbReference>
<dbReference type="FunFam" id="3.30.200.20:FF:000149">
    <property type="entry name" value="serine/threonine-protein kinase unc-51 isoform X1"/>
    <property type="match status" value="1"/>
</dbReference>
<dbReference type="Gene3D" id="3.30.200.20">
    <property type="entry name" value="Phosphorylase Kinase, domain 1"/>
    <property type="match status" value="1"/>
</dbReference>
<dbReference type="Gene3D" id="1.10.510.10">
    <property type="entry name" value="Transferase(Phosphotransferase) domain 1"/>
    <property type="match status" value="1"/>
</dbReference>
<dbReference type="InterPro" id="IPR045269">
    <property type="entry name" value="Atg1-like"/>
</dbReference>
<dbReference type="InterPro" id="IPR048941">
    <property type="entry name" value="ATG1-like_MIT2"/>
</dbReference>
<dbReference type="InterPro" id="IPR022708">
    <property type="entry name" value="Atg1-like_tMIT"/>
</dbReference>
<dbReference type="InterPro" id="IPR011009">
    <property type="entry name" value="Kinase-like_dom_sf"/>
</dbReference>
<dbReference type="InterPro" id="IPR000719">
    <property type="entry name" value="Prot_kinase_dom"/>
</dbReference>
<dbReference type="InterPro" id="IPR017441">
    <property type="entry name" value="Protein_kinase_ATP_BS"/>
</dbReference>
<dbReference type="InterPro" id="IPR016237">
    <property type="entry name" value="Ser/Thr_kin_STPK_Ulk-1/2"/>
</dbReference>
<dbReference type="InterPro" id="IPR008271">
    <property type="entry name" value="Ser/Thr_kinase_AS"/>
</dbReference>
<dbReference type="PANTHER" id="PTHR24348">
    <property type="entry name" value="SERINE/THREONINE-PROTEIN KINASE UNC-51-RELATED"/>
    <property type="match status" value="1"/>
</dbReference>
<dbReference type="PANTHER" id="PTHR24348:SF18">
    <property type="entry name" value="SERINE_THREONINE-PROTEIN KINASE ULK2"/>
    <property type="match status" value="1"/>
</dbReference>
<dbReference type="Pfam" id="PF12063">
    <property type="entry name" value="ATG1-like_MIT1"/>
    <property type="match status" value="1"/>
</dbReference>
<dbReference type="Pfam" id="PF21127">
    <property type="entry name" value="ATG1-like_MIT2"/>
    <property type="match status" value="1"/>
</dbReference>
<dbReference type="Pfam" id="PF00069">
    <property type="entry name" value="Pkinase"/>
    <property type="match status" value="1"/>
</dbReference>
<dbReference type="PIRSF" id="PIRSF000580">
    <property type="entry name" value="Ser/Thr_PK_STPK_ULK-1/2"/>
    <property type="match status" value="1"/>
</dbReference>
<dbReference type="SMART" id="SM00220">
    <property type="entry name" value="S_TKc"/>
    <property type="match status" value="1"/>
</dbReference>
<dbReference type="SUPFAM" id="SSF56112">
    <property type="entry name" value="Protein kinase-like (PK-like)"/>
    <property type="match status" value="1"/>
</dbReference>
<dbReference type="PROSITE" id="PS00107">
    <property type="entry name" value="PROTEIN_KINASE_ATP"/>
    <property type="match status" value="1"/>
</dbReference>
<dbReference type="PROSITE" id="PS50011">
    <property type="entry name" value="PROTEIN_KINASE_DOM"/>
    <property type="match status" value="1"/>
</dbReference>
<dbReference type="PROSITE" id="PS00108">
    <property type="entry name" value="PROTEIN_KINASE_ST"/>
    <property type="match status" value="1"/>
</dbReference>
<comment type="function">
    <text evidence="6 8 9 11">Serine/threonine-protein kinase involved in autophagy in response to starvation. Acts upstream of phosphatidylinositol 3-kinase PIK3C3 to regulate the formation of autophagophores, the precursors of autophagosomes. Part of regulatory feedback loops in autophagy: acts both as a downstream effector and a negative regulator of mammalian target of rapamycin complex 1 (mTORC1) via interaction with RPTOR. Activated via phosphorylation by AMPK, also acts as a negative regulator of AMPK through phosphorylation of the AMPK subunits PRKAA1, PRKAB2 and PRKAG1. May phosphorylate ATG13/KIAA0652, FRS2, FRS3 and RPTOR; however such data need additional evidences. Not involved in ammonia-induced autophagy or in autophagic response of cerebellar granule neurons (CGN) to low potassium concentration. Plays a role early in neuronal differentiation and is required for granule cell axon formation: may govern axon formation via Ras-like GTPase signaling and through regulation of the Rab5-mediated endocytic pathways within developing axons.</text>
</comment>
<comment type="catalytic activity">
    <reaction>
        <text>L-seryl-[protein] + ATP = O-phospho-L-seryl-[protein] + ADP + H(+)</text>
        <dbReference type="Rhea" id="RHEA:17989"/>
        <dbReference type="Rhea" id="RHEA-COMP:9863"/>
        <dbReference type="Rhea" id="RHEA-COMP:11604"/>
        <dbReference type="ChEBI" id="CHEBI:15378"/>
        <dbReference type="ChEBI" id="CHEBI:29999"/>
        <dbReference type="ChEBI" id="CHEBI:30616"/>
        <dbReference type="ChEBI" id="CHEBI:83421"/>
        <dbReference type="ChEBI" id="CHEBI:456216"/>
        <dbReference type="EC" id="2.7.11.1"/>
    </reaction>
</comment>
<comment type="catalytic activity">
    <reaction>
        <text>L-threonyl-[protein] + ATP = O-phospho-L-threonyl-[protein] + ADP + H(+)</text>
        <dbReference type="Rhea" id="RHEA:46608"/>
        <dbReference type="Rhea" id="RHEA-COMP:11060"/>
        <dbReference type="Rhea" id="RHEA-COMP:11605"/>
        <dbReference type="ChEBI" id="CHEBI:15378"/>
        <dbReference type="ChEBI" id="CHEBI:30013"/>
        <dbReference type="ChEBI" id="CHEBI:30616"/>
        <dbReference type="ChEBI" id="CHEBI:61977"/>
        <dbReference type="ChEBI" id="CHEBI:456216"/>
        <dbReference type="EC" id="2.7.11.1"/>
    </reaction>
</comment>
<comment type="subunit">
    <text evidence="1 7 9">Component of a complex consisting of ATG13/KIAA0652, ULK1 and RB1CC1/FIP200. Interacts (via C-terminus) with ATG13/KIAA0652. Associates with the mammalian target of rapamycin complex 1 (mTORC1) through an interaction with RPTOR (By similarity). Interacts with SYNGAP1.</text>
</comment>
<comment type="subcellular location">
    <subcellularLocation>
        <location evidence="9">Cytoplasmic vesicle membrane</location>
        <topology evidence="9">Peripheral membrane protein</topology>
    </subcellularLocation>
    <text>Localizes to pre-autophagosomal membrane.</text>
</comment>
<comment type="tissue specificity">
    <text evidence="5">Widely expressed.</text>
</comment>
<comment type="domain">
    <text evidence="1">The CTD-like region mediates membrane-binding and incorporation into large protein complexes.</text>
</comment>
<comment type="PTM">
    <text evidence="10">Autophosphorylated. In response to nutrient limitation, probably phosphorylated and activated by AMPK, leading to activate autophagy.</text>
</comment>
<comment type="similarity">
    <text evidence="2">Belongs to the protein kinase superfamily. Ser/Thr protein kinase family. APG1/unc-51/ULK1 subfamily.</text>
</comment>
<comment type="sequence caution" evidence="12">
    <conflict type="erroneous initiation">
        <sequence resource="EMBL-CDS" id="BAC65613"/>
    </conflict>
    <text>Extended N-terminus.</text>
</comment>
<organism>
    <name type="scientific">Mus musculus</name>
    <name type="common">Mouse</name>
    <dbReference type="NCBI Taxonomy" id="10090"/>
    <lineage>
        <taxon>Eukaryota</taxon>
        <taxon>Metazoa</taxon>
        <taxon>Chordata</taxon>
        <taxon>Craniata</taxon>
        <taxon>Vertebrata</taxon>
        <taxon>Euteleostomi</taxon>
        <taxon>Mammalia</taxon>
        <taxon>Eutheria</taxon>
        <taxon>Euarchontoglires</taxon>
        <taxon>Glires</taxon>
        <taxon>Rodentia</taxon>
        <taxon>Myomorpha</taxon>
        <taxon>Muroidea</taxon>
        <taxon>Muridae</taxon>
        <taxon>Murinae</taxon>
        <taxon>Mus</taxon>
        <taxon>Mus</taxon>
    </lineage>
</organism>
<proteinExistence type="evidence at protein level"/>
<feature type="chain" id="PRO_0000086783" description="Serine/threonine-protein kinase ULK2">
    <location>
        <begin position="1"/>
        <end position="1037"/>
    </location>
</feature>
<feature type="domain" description="Protein kinase" evidence="2">
    <location>
        <begin position="9"/>
        <end position="271"/>
    </location>
</feature>
<feature type="region of interest" description="Disordered" evidence="4">
    <location>
        <begin position="319"/>
        <end position="350"/>
    </location>
</feature>
<feature type="region of interest" description="Disordered" evidence="4">
    <location>
        <begin position="452"/>
        <end position="480"/>
    </location>
</feature>
<feature type="region of interest" description="Disordered" evidence="4">
    <location>
        <begin position="494"/>
        <end position="515"/>
    </location>
</feature>
<feature type="region of interest" description="Disordered" evidence="4">
    <location>
        <begin position="540"/>
        <end position="594"/>
    </location>
</feature>
<feature type="region of interest" description="Disordered" evidence="4">
    <location>
        <begin position="626"/>
        <end position="697"/>
    </location>
</feature>
<feature type="region of interest" description="CTD-like region" evidence="1">
    <location>
        <begin position="813"/>
        <end position="1037"/>
    </location>
</feature>
<feature type="compositionally biased region" description="Low complexity" evidence="4">
    <location>
        <begin position="335"/>
        <end position="348"/>
    </location>
</feature>
<feature type="compositionally biased region" description="Polar residues" evidence="4">
    <location>
        <begin position="506"/>
        <end position="515"/>
    </location>
</feature>
<feature type="compositionally biased region" description="Polar residues" evidence="4">
    <location>
        <begin position="571"/>
        <end position="585"/>
    </location>
</feature>
<feature type="compositionally biased region" description="Basic and acidic residues" evidence="4">
    <location>
        <begin position="632"/>
        <end position="643"/>
    </location>
</feature>
<feature type="compositionally biased region" description="Polar residues" evidence="4">
    <location>
        <begin position="658"/>
        <end position="678"/>
    </location>
</feature>
<feature type="active site" description="Proton acceptor" evidence="2 3">
    <location>
        <position position="131"/>
    </location>
</feature>
<feature type="binding site" evidence="2">
    <location>
        <begin position="15"/>
        <end position="23"/>
    </location>
    <ligand>
        <name>ATP</name>
        <dbReference type="ChEBI" id="CHEBI:30616"/>
    </ligand>
</feature>
<feature type="binding site" evidence="12">
    <location>
        <position position="39"/>
    </location>
    <ligand>
        <name>ATP</name>
        <dbReference type="ChEBI" id="CHEBI:30616"/>
    </ligand>
</feature>
<feature type="modified residue" description="Phosphoserine" evidence="13">
    <location>
        <position position="430"/>
    </location>
</feature>
<feature type="modified residue" description="Phosphoserine" evidence="13">
    <location>
        <position position="772"/>
    </location>
</feature>
<feature type="modified residue" description="Phosphoserine" evidence="13">
    <location>
        <position position="781"/>
    </location>
</feature>
<feature type="mutagenesis site" description="Decreased kinase activity." evidence="9">
    <original>K</original>
    <variation>T</variation>
    <location>
        <position position="39"/>
    </location>
</feature>
<feature type="sequence conflict" description="In Ref. 2; BAA77341." evidence="12" ref="2">
    <original>L</original>
    <variation>V</variation>
    <location>
        <position position="998"/>
    </location>
</feature>
<reference key="1">
    <citation type="journal article" date="1999" name="Neuron">
        <title>A mouse serine/threonine kinase homologous to C. elegans UNC51 functions in parallel fiber formation of cerebellar granule neurons.</title>
        <authorList>
            <person name="Tomoda T."/>
            <person name="Bhatt R.S."/>
            <person name="Kuroyanagi H."/>
            <person name="Shirasawa T."/>
            <person name="Hatten M.E."/>
        </authorList>
    </citation>
    <scope>NUCLEOTIDE SEQUENCE [MRNA]</scope>
    <scope>FUNCTION</scope>
    <source>
        <strain>C57BL/6J</strain>
        <tissue>Brain</tissue>
    </source>
</reference>
<reference key="2">
    <citation type="journal article" date="1999" name="Oncogene">
        <title>Mouse ULK2, a novel member of the UNC-51-like protein kinases: unique features of functional domains.</title>
        <authorList>
            <person name="Yan J."/>
            <person name="Kuroyanagi H."/>
            <person name="Tomemori T."/>
            <person name="Okazaki N."/>
            <person name="Asato K."/>
            <person name="Matsuda Y."/>
            <person name="Suzuki Y."/>
            <person name="Ohshima Y."/>
            <person name="Mitani S."/>
            <person name="Masuho Y."/>
            <person name="Shirasawa T."/>
            <person name="Muramatsu M."/>
        </authorList>
    </citation>
    <scope>NUCLEOTIDE SEQUENCE [MRNA]</scope>
    <scope>TISSUE SPECIFICITY</scope>
    <scope>AUTOPHOSPHORYLATION</scope>
</reference>
<reference key="3">
    <citation type="journal article" date="2005" name="Science">
        <title>The transcriptional landscape of the mammalian genome.</title>
        <authorList>
            <person name="Carninci P."/>
            <person name="Kasukawa T."/>
            <person name="Katayama S."/>
            <person name="Gough J."/>
            <person name="Frith M.C."/>
            <person name="Maeda N."/>
            <person name="Oyama R."/>
            <person name="Ravasi T."/>
            <person name="Lenhard B."/>
            <person name="Wells C."/>
            <person name="Kodzius R."/>
            <person name="Shimokawa K."/>
            <person name="Bajic V.B."/>
            <person name="Brenner S.E."/>
            <person name="Batalov S."/>
            <person name="Forrest A.R."/>
            <person name="Zavolan M."/>
            <person name="Davis M.J."/>
            <person name="Wilming L.G."/>
            <person name="Aidinis V."/>
            <person name="Allen J.E."/>
            <person name="Ambesi-Impiombato A."/>
            <person name="Apweiler R."/>
            <person name="Aturaliya R.N."/>
            <person name="Bailey T.L."/>
            <person name="Bansal M."/>
            <person name="Baxter L."/>
            <person name="Beisel K.W."/>
            <person name="Bersano T."/>
            <person name="Bono H."/>
            <person name="Chalk A.M."/>
            <person name="Chiu K.P."/>
            <person name="Choudhary V."/>
            <person name="Christoffels A."/>
            <person name="Clutterbuck D.R."/>
            <person name="Crowe M.L."/>
            <person name="Dalla E."/>
            <person name="Dalrymple B.P."/>
            <person name="de Bono B."/>
            <person name="Della Gatta G."/>
            <person name="di Bernardo D."/>
            <person name="Down T."/>
            <person name="Engstrom P."/>
            <person name="Fagiolini M."/>
            <person name="Faulkner G."/>
            <person name="Fletcher C.F."/>
            <person name="Fukushima T."/>
            <person name="Furuno M."/>
            <person name="Futaki S."/>
            <person name="Gariboldi M."/>
            <person name="Georgii-Hemming P."/>
            <person name="Gingeras T.R."/>
            <person name="Gojobori T."/>
            <person name="Green R.E."/>
            <person name="Gustincich S."/>
            <person name="Harbers M."/>
            <person name="Hayashi Y."/>
            <person name="Hensch T.K."/>
            <person name="Hirokawa N."/>
            <person name="Hill D."/>
            <person name="Huminiecki L."/>
            <person name="Iacono M."/>
            <person name="Ikeo K."/>
            <person name="Iwama A."/>
            <person name="Ishikawa T."/>
            <person name="Jakt M."/>
            <person name="Kanapin A."/>
            <person name="Katoh M."/>
            <person name="Kawasawa Y."/>
            <person name="Kelso J."/>
            <person name="Kitamura H."/>
            <person name="Kitano H."/>
            <person name="Kollias G."/>
            <person name="Krishnan S.P."/>
            <person name="Kruger A."/>
            <person name="Kummerfeld S.K."/>
            <person name="Kurochkin I.V."/>
            <person name="Lareau L.F."/>
            <person name="Lazarevic D."/>
            <person name="Lipovich L."/>
            <person name="Liu J."/>
            <person name="Liuni S."/>
            <person name="McWilliam S."/>
            <person name="Madan Babu M."/>
            <person name="Madera M."/>
            <person name="Marchionni L."/>
            <person name="Matsuda H."/>
            <person name="Matsuzawa S."/>
            <person name="Miki H."/>
            <person name="Mignone F."/>
            <person name="Miyake S."/>
            <person name="Morris K."/>
            <person name="Mottagui-Tabar S."/>
            <person name="Mulder N."/>
            <person name="Nakano N."/>
            <person name="Nakauchi H."/>
            <person name="Ng P."/>
            <person name="Nilsson R."/>
            <person name="Nishiguchi S."/>
            <person name="Nishikawa S."/>
            <person name="Nori F."/>
            <person name="Ohara O."/>
            <person name="Okazaki Y."/>
            <person name="Orlando V."/>
            <person name="Pang K.C."/>
            <person name="Pavan W.J."/>
            <person name="Pavesi G."/>
            <person name="Pesole G."/>
            <person name="Petrovsky N."/>
            <person name="Piazza S."/>
            <person name="Reed J."/>
            <person name="Reid J.F."/>
            <person name="Ring B.Z."/>
            <person name="Ringwald M."/>
            <person name="Rost B."/>
            <person name="Ruan Y."/>
            <person name="Salzberg S.L."/>
            <person name="Sandelin A."/>
            <person name="Schneider C."/>
            <person name="Schoenbach C."/>
            <person name="Sekiguchi K."/>
            <person name="Semple C.A."/>
            <person name="Seno S."/>
            <person name="Sessa L."/>
            <person name="Sheng Y."/>
            <person name="Shibata Y."/>
            <person name="Shimada H."/>
            <person name="Shimada K."/>
            <person name="Silva D."/>
            <person name="Sinclair B."/>
            <person name="Sperling S."/>
            <person name="Stupka E."/>
            <person name="Sugiura K."/>
            <person name="Sultana R."/>
            <person name="Takenaka Y."/>
            <person name="Taki K."/>
            <person name="Tammoja K."/>
            <person name="Tan S.L."/>
            <person name="Tang S."/>
            <person name="Taylor M.S."/>
            <person name="Tegner J."/>
            <person name="Teichmann S.A."/>
            <person name="Ueda H.R."/>
            <person name="van Nimwegen E."/>
            <person name="Verardo R."/>
            <person name="Wei C.L."/>
            <person name="Yagi K."/>
            <person name="Yamanishi H."/>
            <person name="Zabarovsky E."/>
            <person name="Zhu S."/>
            <person name="Zimmer A."/>
            <person name="Hide W."/>
            <person name="Bult C."/>
            <person name="Grimmond S.M."/>
            <person name="Teasdale R.D."/>
            <person name="Liu E.T."/>
            <person name="Brusic V."/>
            <person name="Quackenbush J."/>
            <person name="Wahlestedt C."/>
            <person name="Mattick J.S."/>
            <person name="Hume D.A."/>
            <person name="Kai C."/>
            <person name="Sasaki D."/>
            <person name="Tomaru Y."/>
            <person name="Fukuda S."/>
            <person name="Kanamori-Katayama M."/>
            <person name="Suzuki M."/>
            <person name="Aoki J."/>
            <person name="Arakawa T."/>
            <person name="Iida J."/>
            <person name="Imamura K."/>
            <person name="Itoh M."/>
            <person name="Kato T."/>
            <person name="Kawaji H."/>
            <person name="Kawagashira N."/>
            <person name="Kawashima T."/>
            <person name="Kojima M."/>
            <person name="Kondo S."/>
            <person name="Konno H."/>
            <person name="Nakano K."/>
            <person name="Ninomiya N."/>
            <person name="Nishio T."/>
            <person name="Okada M."/>
            <person name="Plessy C."/>
            <person name="Shibata K."/>
            <person name="Shiraki T."/>
            <person name="Suzuki S."/>
            <person name="Tagami M."/>
            <person name="Waki K."/>
            <person name="Watahiki A."/>
            <person name="Okamura-Oho Y."/>
            <person name="Suzuki H."/>
            <person name="Kawai J."/>
            <person name="Hayashizaki Y."/>
        </authorList>
    </citation>
    <scope>NUCLEOTIDE SEQUENCE [LARGE SCALE MRNA]</scope>
    <source>
        <strain>C57BL/6J</strain>
        <tissue>Kidney</tissue>
    </source>
</reference>
<reference key="4">
    <citation type="journal article" date="2003" name="DNA Res.">
        <title>Prediction of the coding sequences of mouse homologues of KIAA gene: II. The complete nucleotide sequences of 400 mouse KIAA-homologous cDNAs identified by screening of terminal sequences of cDNA clones randomly sampled from size-fractionated libraries.</title>
        <authorList>
            <person name="Okazaki N."/>
            <person name="Kikuno R."/>
            <person name="Ohara R."/>
            <person name="Inamoto S."/>
            <person name="Aizawa H."/>
            <person name="Yuasa S."/>
            <person name="Nakajima D."/>
            <person name="Nagase T."/>
            <person name="Ohara O."/>
            <person name="Koga H."/>
        </authorList>
    </citation>
    <scope>NUCLEOTIDE SEQUENCE [LARGE SCALE MRNA]</scope>
    <source>
        <tissue>Brain</tissue>
    </source>
</reference>
<reference key="5">
    <citation type="submission" date="2004-06" db="EMBL/GenBank/DDBJ databases">
        <authorList>
            <person name="Okazaki N."/>
            <person name="Kikuno R."/>
            <person name="Nagase T."/>
            <person name="Ohara O."/>
            <person name="Koga H."/>
        </authorList>
    </citation>
    <scope>SEQUENCE REVISION</scope>
</reference>
<reference key="6">
    <citation type="journal article" date="2004" name="Genome Res.">
        <title>The status, quality, and expansion of the NIH full-length cDNA project: the Mammalian Gene Collection (MGC).</title>
        <authorList>
            <consortium name="The MGC Project Team"/>
        </authorList>
    </citation>
    <scope>NUCLEOTIDE SEQUENCE [LARGE SCALE MRNA]</scope>
    <source>
        <strain>C57BL/6J</strain>
        <tissue>Brain</tissue>
    </source>
</reference>
<reference key="7">
    <citation type="journal article" date="2004" name="Genes Dev.">
        <title>Role of Unc51.1 and its binding partners in CNS axon outgrowth.</title>
        <authorList>
            <person name="Tomoda T."/>
            <person name="Kim J.H."/>
            <person name="Zhan C."/>
            <person name="Hatten M.E."/>
        </authorList>
    </citation>
    <scope>INTERACTION WITH SYNGAP1</scope>
</reference>
<reference key="8">
    <citation type="journal article" date="2007" name="Cell. Signal.">
        <title>UNC-51-like kinase regulation of fibroblast growth factor receptor substrate 2/3.</title>
        <authorList>
            <person name="Avery A.W."/>
            <person name="Figueroa C."/>
            <person name="Vojtek A.B."/>
        </authorList>
    </citation>
    <scope>FUNCTION IN PHOSPHORYLATION OF FRS2 AND FRS3</scope>
</reference>
<reference key="9">
    <citation type="journal article" date="2008" name="J. Cell Biol.">
        <title>FIP200, a ULK-interacting protein, is required for autophagosome formation in mammalian cells.</title>
        <authorList>
            <person name="Hara T."/>
            <person name="Takamura A."/>
            <person name="Kishi C."/>
            <person name="Iemura S."/>
            <person name="Natsume T."/>
            <person name="Guan J.L."/>
            <person name="Mizushima N."/>
        </authorList>
    </citation>
    <scope>FUNCTION</scope>
    <scope>SUBCELLULAR LOCATION</scope>
    <scope>INTERACTION WITH RB1CC1</scope>
    <scope>MUTAGENESIS OF LYS-39</scope>
</reference>
<reference key="10">
    <citation type="journal article" date="2010" name="Cell">
        <title>A tissue-specific atlas of mouse protein phosphorylation and expression.</title>
        <authorList>
            <person name="Huttlin E.L."/>
            <person name="Jedrychowski M.P."/>
            <person name="Elias J.E."/>
            <person name="Goswami T."/>
            <person name="Rad R."/>
            <person name="Beausoleil S.A."/>
            <person name="Villen J."/>
            <person name="Haas W."/>
            <person name="Sowa M.E."/>
            <person name="Gygi S.P."/>
        </authorList>
    </citation>
    <scope>PHOSPHORYLATION [LARGE SCALE ANALYSIS] AT SER-430; SER-772 AND SER-781</scope>
    <scope>IDENTIFICATION BY MASS SPECTROMETRY [LARGE SCALE ANALYSIS]</scope>
    <source>
        <tissue>Brain</tissue>
        <tissue>Kidney</tissue>
        <tissue>Spleen</tissue>
        <tissue>Testis</tissue>
    </source>
</reference>
<reference key="11">
    <citation type="journal article" date="2011" name="Autophagy">
        <title>Ulk1-mediated phosphorylation of AMPK constitutes a negative regulatory feedback loop.</title>
        <authorList>
            <person name="Loffler A.S."/>
            <person name="Alers S."/>
            <person name="Dieterle A.M."/>
            <person name="Keppeler H."/>
            <person name="Franz-Wachtel M."/>
            <person name="Kundu M."/>
            <person name="Campbell D.G."/>
            <person name="Wesselborg S."/>
            <person name="Alessi D.R."/>
            <person name="Stork B."/>
        </authorList>
    </citation>
    <scope>FUNCTION IN PHOSPHORYLATION OF AMPK</scope>
</reference>
<reference key="12">
    <citation type="journal article" date="2011" name="Nat. Cell Biol.">
        <title>AMPK and mTOR regulate autophagy through direct phosphorylation of Ulk1.</title>
        <authorList>
            <person name="Kim J."/>
            <person name="Kundu M."/>
            <person name="Viollet B."/>
            <person name="Guan K.L."/>
        </authorList>
    </citation>
    <scope>PHOSPHORYLATION BY AMPK</scope>
</reference>
<accession>Q9QY01</accession>
<accession>Q80TV7</accession>
<accession>Q9WTP4</accession>
<evidence type="ECO:0000250" key="1"/>
<evidence type="ECO:0000255" key="2">
    <source>
        <dbReference type="PROSITE-ProRule" id="PRU00159"/>
    </source>
</evidence>
<evidence type="ECO:0000255" key="3">
    <source>
        <dbReference type="PROSITE-ProRule" id="PRU10027"/>
    </source>
</evidence>
<evidence type="ECO:0000256" key="4">
    <source>
        <dbReference type="SAM" id="MobiDB-lite"/>
    </source>
</evidence>
<evidence type="ECO:0000269" key="5">
    <source>
    </source>
</evidence>
<evidence type="ECO:0000269" key="6">
    <source>
    </source>
</evidence>
<evidence type="ECO:0000269" key="7">
    <source>
    </source>
</evidence>
<evidence type="ECO:0000269" key="8">
    <source>
    </source>
</evidence>
<evidence type="ECO:0000269" key="9">
    <source>
    </source>
</evidence>
<evidence type="ECO:0000269" key="10">
    <source>
    </source>
</evidence>
<evidence type="ECO:0000269" key="11">
    <source>
    </source>
</evidence>
<evidence type="ECO:0000305" key="12"/>
<evidence type="ECO:0007744" key="13">
    <source>
    </source>
</evidence>
<protein>
    <recommendedName>
        <fullName>Serine/threonine-protein kinase ULK2</fullName>
        <ecNumber>2.7.11.1</ecNumber>
    </recommendedName>
    <alternativeName>
        <fullName>Serine/threonine-protein kinase Unc51.2</fullName>
    </alternativeName>
    <alternativeName>
        <fullName>Unc-51-like kinase 2</fullName>
    </alternativeName>
</protein>
<keyword id="KW-0067">ATP-binding</keyword>
<keyword id="KW-0072">Autophagy</keyword>
<keyword id="KW-0968">Cytoplasmic vesicle</keyword>
<keyword id="KW-0418">Kinase</keyword>
<keyword id="KW-0472">Membrane</keyword>
<keyword id="KW-0524">Neurogenesis</keyword>
<keyword id="KW-0547">Nucleotide-binding</keyword>
<keyword id="KW-0597">Phosphoprotein</keyword>
<keyword id="KW-1185">Reference proteome</keyword>
<keyword id="KW-0723">Serine/threonine-protein kinase</keyword>
<keyword id="KW-0808">Transferase</keyword>
<gene>
    <name type="primary">Ulk2</name>
    <name type="synonym">Kiaa0623</name>
</gene>